<organism evidence="4">
    <name type="scientific">Mus musculus</name>
    <name type="common">Mouse</name>
    <dbReference type="NCBI Taxonomy" id="10090"/>
    <lineage>
        <taxon>Eukaryota</taxon>
        <taxon>Metazoa</taxon>
        <taxon>Chordata</taxon>
        <taxon>Craniata</taxon>
        <taxon>Vertebrata</taxon>
        <taxon>Euteleostomi</taxon>
        <taxon>Mammalia</taxon>
        <taxon>Eutheria</taxon>
        <taxon>Euarchontoglires</taxon>
        <taxon>Glires</taxon>
        <taxon>Rodentia</taxon>
        <taxon>Myomorpha</taxon>
        <taxon>Muroidea</taxon>
        <taxon>Muridae</taxon>
        <taxon>Murinae</taxon>
        <taxon>Mus</taxon>
        <taxon>Mus</taxon>
    </lineage>
</organism>
<comment type="function">
    <text evidence="2">Dispensable for normal development and fertility.</text>
</comment>
<comment type="tissue specificity">
    <text evidence="2">Expressed in testis and epididymis (PubMed:36871790). Expressed at lower levels in ovary (PubMed:36871790).</text>
</comment>
<comment type="disruption phenotype">
    <text evidence="2">No visible phenotype (PubMed:36871790). No effect on testis size, testis-to-body weight ratio, germ cell development or spermiogenesis (PubMed:36871790). No effect on sperm morphology, count or motility (PubMed:36871790). No effect on levels of germ cell apoptosis, chromosome H1t histone association or acrosome biogenesis (PubMed:36871790).</text>
</comment>
<dbReference type="EMBL" id="AK029607">
    <property type="protein sequence ID" value="BAC26530.1"/>
    <property type="molecule type" value="mRNA"/>
</dbReference>
<dbReference type="EMBL" id="AK161407">
    <property type="protein sequence ID" value="BAE36377.1"/>
    <property type="molecule type" value="mRNA"/>
</dbReference>
<dbReference type="EMBL" id="BC115646">
    <property type="protein sequence ID" value="AAI15647.1"/>
    <property type="molecule type" value="mRNA"/>
</dbReference>
<dbReference type="EMBL" id="BC115647">
    <property type="protein sequence ID" value="AAI15648.1"/>
    <property type="molecule type" value="mRNA"/>
</dbReference>
<dbReference type="CCDS" id="CCDS40156.1"/>
<dbReference type="RefSeq" id="NP_775585.1">
    <property type="nucleotide sequence ID" value="NM_173409.4"/>
</dbReference>
<dbReference type="SMR" id="Q8CDT9"/>
<dbReference type="STRING" id="10090.ENSMUSP00000070291"/>
<dbReference type="PhosphoSitePlus" id="Q8CDT9"/>
<dbReference type="PaxDb" id="10090-ENSMUSP00000070291"/>
<dbReference type="ProteomicsDB" id="340849"/>
<dbReference type="Antibodypedia" id="49180">
    <property type="antibodies" value="20 antibodies from 7 providers"/>
</dbReference>
<dbReference type="Ensembl" id="ENSMUST00000070980.4">
    <property type="protein sequence ID" value="ENSMUSP00000070291.4"/>
    <property type="gene ID" value="ENSMUSG00000013668.10"/>
</dbReference>
<dbReference type="GeneID" id="233918"/>
<dbReference type="KEGG" id="mmu:233918"/>
<dbReference type="UCSC" id="uc009kay.1">
    <property type="organism name" value="mouse"/>
</dbReference>
<dbReference type="AGR" id="MGI:1914681"/>
<dbReference type="MGI" id="MGI:1914681">
    <property type="gene designation" value="4933402N03Rik"/>
</dbReference>
<dbReference type="VEuPathDB" id="HostDB:ENSMUSG00000013668"/>
<dbReference type="eggNOG" id="ENOG502RNK6">
    <property type="taxonomic scope" value="Eukaryota"/>
</dbReference>
<dbReference type="GeneTree" id="ENSGT00390000005511"/>
<dbReference type="HOGENOM" id="CLU_071615_0_0_1"/>
<dbReference type="OMA" id="MNVVFKS"/>
<dbReference type="OrthoDB" id="9446792at2759"/>
<dbReference type="TreeFam" id="TF337245"/>
<dbReference type="BioGRID-ORCS" id="233918">
    <property type="hits" value="2 hits in 76 CRISPR screens"/>
</dbReference>
<dbReference type="PRO" id="PR:Q8CDT9"/>
<dbReference type="Proteomes" id="UP000000589">
    <property type="component" value="Chromosome 7"/>
</dbReference>
<dbReference type="RNAct" id="Q8CDT9">
    <property type="molecule type" value="protein"/>
</dbReference>
<dbReference type="Bgee" id="ENSMUSG00000013668">
    <property type="expression patterns" value="Expressed in seminiferous tubule of testis and 3 other cell types or tissues"/>
</dbReference>
<dbReference type="InterPro" id="IPR040721">
    <property type="entry name" value="DUF5520"/>
</dbReference>
<dbReference type="PANTHER" id="PTHR47509">
    <property type="entry name" value="MCG1612"/>
    <property type="match status" value="1"/>
</dbReference>
<dbReference type="PANTHER" id="PTHR47509:SF1">
    <property type="entry name" value="RIKEN CDNA 4933402N03 GENE"/>
    <property type="match status" value="1"/>
</dbReference>
<dbReference type="Pfam" id="PF17658">
    <property type="entry name" value="DUF5520"/>
    <property type="match status" value="1"/>
</dbReference>
<name>CJ120_MOUSE</name>
<accession>Q8CDT9</accession>
<keyword id="KW-1185">Reference proteome</keyword>
<evidence type="ECO:0000256" key="1">
    <source>
        <dbReference type="SAM" id="MobiDB-lite"/>
    </source>
</evidence>
<evidence type="ECO:0000269" key="2">
    <source>
    </source>
</evidence>
<evidence type="ECO:0000305" key="3"/>
<evidence type="ECO:0000312" key="4">
    <source>
        <dbReference type="EMBL" id="BAC26530.1"/>
    </source>
</evidence>
<evidence type="ECO:0000312" key="5">
    <source>
        <dbReference type="Proteomes" id="UP000000589"/>
    </source>
</evidence>
<protein>
    <recommendedName>
        <fullName evidence="3">Uncharacterized protein C10orf120 homolog</fullName>
    </recommendedName>
</protein>
<sequence>MIKEWENHFQQYKSQRCGYPKAQEGTPAEGEQNSRKPSRICSDNHPWVVQDFPHHKEDLCTPSPLGIWTAFYKSDPRIALGKYSPMEQEIQHLGGVHTRAARRFLVEKQYKEWRMLRELQKQSADYKRAIELGRDPSSYAVCGPPEKIWTAKVSVPAEEFQTPHREVTGIKKHIKRMQLARALENKQSSTDIGRLSPKTDKFSEEGEDDDTDSNDKANRGEKGEAKFEPTNKREVILNVAFKSEETKSCVVCHRNDRKTFLPVKRPERRITGLTNRNLFPITGFPGDLMLMNQDFVSKGIHPSDAIKIYWLPEEDLFKGRKQRPACCPH</sequence>
<feature type="chain" id="PRO_0000458769" description="Uncharacterized protein C10orf120 homolog">
    <location>
        <begin position="1"/>
        <end position="329"/>
    </location>
</feature>
<feature type="region of interest" description="Disordered" evidence="1">
    <location>
        <begin position="16"/>
        <end position="41"/>
    </location>
</feature>
<feature type="region of interest" description="Disordered" evidence="1">
    <location>
        <begin position="183"/>
        <end position="229"/>
    </location>
</feature>
<feature type="compositionally biased region" description="Basic and acidic residues" evidence="1">
    <location>
        <begin position="213"/>
        <end position="229"/>
    </location>
</feature>
<proteinExistence type="evidence at transcript level"/>
<reference evidence="5" key="1">
    <citation type="journal article" date="2005" name="Science">
        <title>The transcriptional landscape of the mammalian genome.</title>
        <authorList>
            <person name="Carninci P."/>
            <person name="Kasukawa T."/>
            <person name="Katayama S."/>
            <person name="Gough J."/>
            <person name="Frith M.C."/>
            <person name="Maeda N."/>
            <person name="Oyama R."/>
            <person name="Ravasi T."/>
            <person name="Lenhard B."/>
            <person name="Wells C."/>
            <person name="Kodzius R."/>
            <person name="Shimokawa K."/>
            <person name="Bajic V.B."/>
            <person name="Brenner S.E."/>
            <person name="Batalov S."/>
            <person name="Forrest A.R."/>
            <person name="Zavolan M."/>
            <person name="Davis M.J."/>
            <person name="Wilming L.G."/>
            <person name="Aidinis V."/>
            <person name="Allen J.E."/>
            <person name="Ambesi-Impiombato A."/>
            <person name="Apweiler R."/>
            <person name="Aturaliya R.N."/>
            <person name="Bailey T.L."/>
            <person name="Bansal M."/>
            <person name="Baxter L."/>
            <person name="Beisel K.W."/>
            <person name="Bersano T."/>
            <person name="Bono H."/>
            <person name="Chalk A.M."/>
            <person name="Chiu K.P."/>
            <person name="Choudhary V."/>
            <person name="Christoffels A."/>
            <person name="Clutterbuck D.R."/>
            <person name="Crowe M.L."/>
            <person name="Dalla E."/>
            <person name="Dalrymple B.P."/>
            <person name="de Bono B."/>
            <person name="Della Gatta G."/>
            <person name="di Bernardo D."/>
            <person name="Down T."/>
            <person name="Engstrom P."/>
            <person name="Fagiolini M."/>
            <person name="Faulkner G."/>
            <person name="Fletcher C.F."/>
            <person name="Fukushima T."/>
            <person name="Furuno M."/>
            <person name="Futaki S."/>
            <person name="Gariboldi M."/>
            <person name="Georgii-Hemming P."/>
            <person name="Gingeras T.R."/>
            <person name="Gojobori T."/>
            <person name="Green R.E."/>
            <person name="Gustincich S."/>
            <person name="Harbers M."/>
            <person name="Hayashi Y."/>
            <person name="Hensch T.K."/>
            <person name="Hirokawa N."/>
            <person name="Hill D."/>
            <person name="Huminiecki L."/>
            <person name="Iacono M."/>
            <person name="Ikeo K."/>
            <person name="Iwama A."/>
            <person name="Ishikawa T."/>
            <person name="Jakt M."/>
            <person name="Kanapin A."/>
            <person name="Katoh M."/>
            <person name="Kawasawa Y."/>
            <person name="Kelso J."/>
            <person name="Kitamura H."/>
            <person name="Kitano H."/>
            <person name="Kollias G."/>
            <person name="Krishnan S.P."/>
            <person name="Kruger A."/>
            <person name="Kummerfeld S.K."/>
            <person name="Kurochkin I.V."/>
            <person name="Lareau L.F."/>
            <person name="Lazarevic D."/>
            <person name="Lipovich L."/>
            <person name="Liu J."/>
            <person name="Liuni S."/>
            <person name="McWilliam S."/>
            <person name="Madan Babu M."/>
            <person name="Madera M."/>
            <person name="Marchionni L."/>
            <person name="Matsuda H."/>
            <person name="Matsuzawa S."/>
            <person name="Miki H."/>
            <person name="Mignone F."/>
            <person name="Miyake S."/>
            <person name="Morris K."/>
            <person name="Mottagui-Tabar S."/>
            <person name="Mulder N."/>
            <person name="Nakano N."/>
            <person name="Nakauchi H."/>
            <person name="Ng P."/>
            <person name="Nilsson R."/>
            <person name="Nishiguchi S."/>
            <person name="Nishikawa S."/>
            <person name="Nori F."/>
            <person name="Ohara O."/>
            <person name="Okazaki Y."/>
            <person name="Orlando V."/>
            <person name="Pang K.C."/>
            <person name="Pavan W.J."/>
            <person name="Pavesi G."/>
            <person name="Pesole G."/>
            <person name="Petrovsky N."/>
            <person name="Piazza S."/>
            <person name="Reed J."/>
            <person name="Reid J.F."/>
            <person name="Ring B.Z."/>
            <person name="Ringwald M."/>
            <person name="Rost B."/>
            <person name="Ruan Y."/>
            <person name="Salzberg S.L."/>
            <person name="Sandelin A."/>
            <person name="Schneider C."/>
            <person name="Schoenbach C."/>
            <person name="Sekiguchi K."/>
            <person name="Semple C.A."/>
            <person name="Seno S."/>
            <person name="Sessa L."/>
            <person name="Sheng Y."/>
            <person name="Shibata Y."/>
            <person name="Shimada H."/>
            <person name="Shimada K."/>
            <person name="Silva D."/>
            <person name="Sinclair B."/>
            <person name="Sperling S."/>
            <person name="Stupka E."/>
            <person name="Sugiura K."/>
            <person name="Sultana R."/>
            <person name="Takenaka Y."/>
            <person name="Taki K."/>
            <person name="Tammoja K."/>
            <person name="Tan S.L."/>
            <person name="Tang S."/>
            <person name="Taylor M.S."/>
            <person name="Tegner J."/>
            <person name="Teichmann S.A."/>
            <person name="Ueda H.R."/>
            <person name="van Nimwegen E."/>
            <person name="Verardo R."/>
            <person name="Wei C.L."/>
            <person name="Yagi K."/>
            <person name="Yamanishi H."/>
            <person name="Zabarovsky E."/>
            <person name="Zhu S."/>
            <person name="Zimmer A."/>
            <person name="Hide W."/>
            <person name="Bult C."/>
            <person name="Grimmond S.M."/>
            <person name="Teasdale R.D."/>
            <person name="Liu E.T."/>
            <person name="Brusic V."/>
            <person name="Quackenbush J."/>
            <person name="Wahlestedt C."/>
            <person name="Mattick J.S."/>
            <person name="Hume D.A."/>
            <person name="Kai C."/>
            <person name="Sasaki D."/>
            <person name="Tomaru Y."/>
            <person name="Fukuda S."/>
            <person name="Kanamori-Katayama M."/>
            <person name="Suzuki M."/>
            <person name="Aoki J."/>
            <person name="Arakawa T."/>
            <person name="Iida J."/>
            <person name="Imamura K."/>
            <person name="Itoh M."/>
            <person name="Kato T."/>
            <person name="Kawaji H."/>
            <person name="Kawagashira N."/>
            <person name="Kawashima T."/>
            <person name="Kojima M."/>
            <person name="Kondo S."/>
            <person name="Konno H."/>
            <person name="Nakano K."/>
            <person name="Ninomiya N."/>
            <person name="Nishio T."/>
            <person name="Okada M."/>
            <person name="Plessy C."/>
            <person name="Shibata K."/>
            <person name="Shiraki T."/>
            <person name="Suzuki S."/>
            <person name="Tagami M."/>
            <person name="Waki K."/>
            <person name="Watahiki A."/>
            <person name="Okamura-Oho Y."/>
            <person name="Suzuki H."/>
            <person name="Kawai J."/>
            <person name="Hayashizaki Y."/>
        </authorList>
    </citation>
    <scope>NUCLEOTIDE SEQUENCE [LARGE SCALE MRNA]</scope>
    <source>
        <strain evidence="5">C57BL/6J</strain>
        <tissue evidence="5">Testis</tissue>
    </source>
</reference>
<reference evidence="5" key="2">
    <citation type="journal article" date="2009" name="PLoS Biol.">
        <title>Lineage-specific biology revealed by a finished genome assembly of the mouse.</title>
        <authorList>
            <person name="Church D.M."/>
            <person name="Goodstadt L."/>
            <person name="Hillier L.W."/>
            <person name="Zody M.C."/>
            <person name="Goldstein S."/>
            <person name="She X."/>
            <person name="Bult C.J."/>
            <person name="Agarwala R."/>
            <person name="Cherry J.L."/>
            <person name="DiCuccio M."/>
            <person name="Hlavina W."/>
            <person name="Kapustin Y."/>
            <person name="Meric P."/>
            <person name="Maglott D."/>
            <person name="Birtle Z."/>
            <person name="Marques A.C."/>
            <person name="Graves T."/>
            <person name="Zhou S."/>
            <person name="Teague B."/>
            <person name="Potamousis K."/>
            <person name="Churas C."/>
            <person name="Place M."/>
            <person name="Herschleb J."/>
            <person name="Runnheim R."/>
            <person name="Forrest D."/>
            <person name="Amos-Landgraf J."/>
            <person name="Schwartz D.C."/>
            <person name="Cheng Z."/>
            <person name="Lindblad-Toh K."/>
            <person name="Eichler E.E."/>
            <person name="Ponting C.P."/>
        </authorList>
    </citation>
    <scope>NUCLEOTIDE SEQUENCE [LARGE SCALE GENOMIC DNA]</scope>
    <source>
        <strain evidence="5">C57BL/6J</strain>
    </source>
</reference>
<reference evidence="3" key="3">
    <citation type="journal article" date="2023" name="Dev. Biol.">
        <title>C9orf131 and C10orf120 are not essential for male fertility in humans or mice.</title>
        <authorList>
            <person name="He J."/>
            <person name="Su L."/>
            <person name="Wang W."/>
            <person name="Li Y."/>
            <person name="Meng L."/>
            <person name="Tan C."/>
            <person name="Lin G."/>
            <person name="Tan Y.Q."/>
            <person name="Zhang Q."/>
            <person name="Tu C."/>
        </authorList>
    </citation>
    <scope>FUNCTION</scope>
    <scope>TISSUE SPECIFICITY</scope>
    <scope>DISRUPTION PHENOTYPE</scope>
</reference>